<accession>Q759Y8</accession>
<protein>
    <recommendedName>
        <fullName>tRNA-splicing endonuclease subunit SEN15</fullName>
    </recommendedName>
    <alternativeName>
        <fullName>tRNA-intron endonuclease SEN15</fullName>
    </alternativeName>
</protein>
<dbReference type="EMBL" id="AE016817">
    <property type="protein sequence ID" value="AAS52055.1"/>
    <property type="molecule type" value="Genomic_DNA"/>
</dbReference>
<dbReference type="RefSeq" id="NP_984231.1">
    <property type="nucleotide sequence ID" value="NM_209584.1"/>
</dbReference>
<dbReference type="SMR" id="Q759Y8"/>
<dbReference type="FunCoup" id="Q759Y8">
    <property type="interactions" value="90"/>
</dbReference>
<dbReference type="STRING" id="284811.Q759Y8"/>
<dbReference type="EnsemblFungi" id="AAS52055">
    <property type="protein sequence ID" value="AAS52055"/>
    <property type="gene ID" value="AGOS_ADR135W"/>
</dbReference>
<dbReference type="GeneID" id="4620392"/>
<dbReference type="KEGG" id="ago:AGOS_ADR135W"/>
<dbReference type="eggNOG" id="ENOG502SC4F">
    <property type="taxonomic scope" value="Eukaryota"/>
</dbReference>
<dbReference type="HOGENOM" id="CLU_083361_2_0_1"/>
<dbReference type="InParanoid" id="Q759Y8"/>
<dbReference type="OMA" id="VYYFVYK"/>
<dbReference type="OrthoDB" id="10002170at2759"/>
<dbReference type="Proteomes" id="UP000000591">
    <property type="component" value="Chromosome IV"/>
</dbReference>
<dbReference type="GO" id="GO:0000214">
    <property type="term" value="C:tRNA-intron endonuclease complex"/>
    <property type="evidence" value="ECO:0000318"/>
    <property type="project" value="GO_Central"/>
</dbReference>
<dbReference type="GO" id="GO:0003676">
    <property type="term" value="F:nucleic acid binding"/>
    <property type="evidence" value="ECO:0007669"/>
    <property type="project" value="InterPro"/>
</dbReference>
<dbReference type="GO" id="GO:0000213">
    <property type="term" value="F:tRNA-intron endonuclease activity"/>
    <property type="evidence" value="ECO:0007669"/>
    <property type="project" value="EnsemblFungi"/>
</dbReference>
<dbReference type="GO" id="GO:0000379">
    <property type="term" value="P:tRNA-type intron splice site recognition and cleavage"/>
    <property type="evidence" value="ECO:0000318"/>
    <property type="project" value="GO_Central"/>
</dbReference>
<dbReference type="Gene3D" id="3.40.1350.10">
    <property type="match status" value="1"/>
</dbReference>
<dbReference type="InterPro" id="IPR042777">
    <property type="entry name" value="Sen15_fungi"/>
</dbReference>
<dbReference type="InterPro" id="IPR018593">
    <property type="entry name" value="tRNA-endonuc_su_Sen15"/>
</dbReference>
<dbReference type="InterPro" id="IPR011856">
    <property type="entry name" value="tRNA_endonuc-like_dom_sf"/>
</dbReference>
<dbReference type="InterPro" id="IPR036167">
    <property type="entry name" value="tRNA_intron_Endo_cat-like_sf"/>
</dbReference>
<dbReference type="PANTHER" id="PTHR28518">
    <property type="entry name" value="TRNA-SPLICING ENDONUCLEASE SUBUNIT SEN15"/>
    <property type="match status" value="1"/>
</dbReference>
<dbReference type="PANTHER" id="PTHR28518:SF1">
    <property type="entry name" value="TRNA-SPLICING ENDONUCLEASE SUBUNIT SEN15"/>
    <property type="match status" value="1"/>
</dbReference>
<dbReference type="Pfam" id="PF09631">
    <property type="entry name" value="Sen15"/>
    <property type="match status" value="1"/>
</dbReference>
<dbReference type="SUPFAM" id="SSF53032">
    <property type="entry name" value="tRNA-intron endonuclease catalytic domain-like"/>
    <property type="match status" value="1"/>
</dbReference>
<keyword id="KW-1185">Reference proteome</keyword>
<keyword id="KW-0819">tRNA processing</keyword>
<evidence type="ECO:0000250" key="1"/>
<evidence type="ECO:0000305" key="2"/>
<feature type="chain" id="PRO_0000194025" description="tRNA-splicing endonuclease subunit SEN15">
    <location>
        <begin position="1"/>
        <end position="118"/>
    </location>
</feature>
<organism>
    <name type="scientific">Eremothecium gossypii (strain ATCC 10895 / CBS 109.51 / FGSC 9923 / NRRL Y-1056)</name>
    <name type="common">Yeast</name>
    <name type="synonym">Ashbya gossypii</name>
    <dbReference type="NCBI Taxonomy" id="284811"/>
    <lineage>
        <taxon>Eukaryota</taxon>
        <taxon>Fungi</taxon>
        <taxon>Dikarya</taxon>
        <taxon>Ascomycota</taxon>
        <taxon>Saccharomycotina</taxon>
        <taxon>Saccharomycetes</taxon>
        <taxon>Saccharomycetales</taxon>
        <taxon>Saccharomycetaceae</taxon>
        <taxon>Eremothecium</taxon>
    </lineage>
</organism>
<gene>
    <name type="primary">SEN15</name>
    <name type="ordered locus">ADR135W</name>
</gene>
<sequence>MSVSYNGGLTGLTALVRNNLVHYQQWSDVEVVPLRDREALRGRPAQKLSNDDEEIGVEYVLPVELSQYRSSGVTLEALDKVFSQLPASCKRVVLAISSDDGTVVYYTVYQGLQRPRKN</sequence>
<comment type="function">
    <text evidence="1">Non-catalytic subunit of the tRNA-splicing endonuclease complex, a complex responsible for identification and cleavage of the splice sites in pre-tRNA. It cleaves pre-tRNA at the 5' and 3' splice sites to release the intron. The products are an intron and two tRNA half-molecules bearing 2',3' cyclic phosphate and 5'-OH termini. There are no conserved sequences at the splice sites, but the intron is invariably located at the same site in the gene, placing the splice sites an invariant distance from the constant structural features of the tRNA body (By similarity).</text>
</comment>
<comment type="subunit">
    <text evidence="1">tRNA splicing endonuclease is a heterotetramer composed of SEN2, SEN15, SEN34 and SEN54. Interacts directly with SEN34 (By similarity).</text>
</comment>
<comment type="similarity">
    <text evidence="2">Belongs to the SEN15 family.</text>
</comment>
<name>SEN15_EREGS</name>
<proteinExistence type="inferred from homology"/>
<reference key="1">
    <citation type="journal article" date="2004" name="Science">
        <title>The Ashbya gossypii genome as a tool for mapping the ancient Saccharomyces cerevisiae genome.</title>
        <authorList>
            <person name="Dietrich F.S."/>
            <person name="Voegeli S."/>
            <person name="Brachat S."/>
            <person name="Lerch A."/>
            <person name="Gates K."/>
            <person name="Steiner S."/>
            <person name="Mohr C."/>
            <person name="Poehlmann R."/>
            <person name="Luedi P."/>
            <person name="Choi S."/>
            <person name="Wing R.A."/>
            <person name="Flavier A."/>
            <person name="Gaffney T.D."/>
            <person name="Philippsen P."/>
        </authorList>
    </citation>
    <scope>NUCLEOTIDE SEQUENCE [LARGE SCALE GENOMIC DNA]</scope>
    <source>
        <strain>ATCC 10895 / CBS 109.51 / FGSC 9923 / NRRL Y-1056</strain>
    </source>
</reference>
<reference key="2">
    <citation type="journal article" date="2013" name="G3 (Bethesda)">
        <title>Genomes of Ashbya fungi isolated from insects reveal four mating-type loci, numerous translocations, lack of transposons, and distinct gene duplications.</title>
        <authorList>
            <person name="Dietrich F.S."/>
            <person name="Voegeli S."/>
            <person name="Kuo S."/>
            <person name="Philippsen P."/>
        </authorList>
    </citation>
    <scope>GENOME REANNOTATION</scope>
    <source>
        <strain>ATCC 10895 / CBS 109.51 / FGSC 9923 / NRRL Y-1056</strain>
    </source>
</reference>